<dbReference type="EC" id="2.7.7.6" evidence="1"/>
<dbReference type="EMBL" id="CP000107">
    <property type="protein sequence ID" value="AAZ68220.1"/>
    <property type="molecule type" value="Genomic_DNA"/>
</dbReference>
<dbReference type="RefSeq" id="WP_011304298.1">
    <property type="nucleotide sequence ID" value="NC_007354.1"/>
</dbReference>
<dbReference type="SMR" id="Q3YST5"/>
<dbReference type="FunCoup" id="Q3YST5">
    <property type="interactions" value="324"/>
</dbReference>
<dbReference type="STRING" id="269484.Ecaj_0169"/>
<dbReference type="KEGG" id="ecn:Ecaj_0169"/>
<dbReference type="eggNOG" id="COG0085">
    <property type="taxonomic scope" value="Bacteria"/>
</dbReference>
<dbReference type="HOGENOM" id="CLU_000524_4_1_5"/>
<dbReference type="InParanoid" id="Q3YST5"/>
<dbReference type="Proteomes" id="UP000000435">
    <property type="component" value="Chromosome"/>
</dbReference>
<dbReference type="GO" id="GO:0000428">
    <property type="term" value="C:DNA-directed RNA polymerase complex"/>
    <property type="evidence" value="ECO:0007669"/>
    <property type="project" value="UniProtKB-KW"/>
</dbReference>
<dbReference type="GO" id="GO:0003677">
    <property type="term" value="F:DNA binding"/>
    <property type="evidence" value="ECO:0007669"/>
    <property type="project" value="UniProtKB-UniRule"/>
</dbReference>
<dbReference type="GO" id="GO:0003899">
    <property type="term" value="F:DNA-directed RNA polymerase activity"/>
    <property type="evidence" value="ECO:0007669"/>
    <property type="project" value="UniProtKB-UniRule"/>
</dbReference>
<dbReference type="GO" id="GO:0032549">
    <property type="term" value="F:ribonucleoside binding"/>
    <property type="evidence" value="ECO:0007669"/>
    <property type="project" value="InterPro"/>
</dbReference>
<dbReference type="GO" id="GO:0006351">
    <property type="term" value="P:DNA-templated transcription"/>
    <property type="evidence" value="ECO:0007669"/>
    <property type="project" value="UniProtKB-UniRule"/>
</dbReference>
<dbReference type="CDD" id="cd00653">
    <property type="entry name" value="RNA_pol_B_RPB2"/>
    <property type="match status" value="1"/>
</dbReference>
<dbReference type="Gene3D" id="2.40.50.100">
    <property type="match status" value="1"/>
</dbReference>
<dbReference type="Gene3D" id="2.40.50.150">
    <property type="match status" value="1"/>
</dbReference>
<dbReference type="Gene3D" id="3.90.1100.10">
    <property type="match status" value="2"/>
</dbReference>
<dbReference type="Gene3D" id="2.30.150.10">
    <property type="entry name" value="DNA-directed RNA polymerase, beta subunit, external 1 domain"/>
    <property type="match status" value="1"/>
</dbReference>
<dbReference type="Gene3D" id="2.40.270.10">
    <property type="entry name" value="DNA-directed RNA polymerase, subunit 2, domain 6"/>
    <property type="match status" value="2"/>
</dbReference>
<dbReference type="Gene3D" id="3.90.1800.10">
    <property type="entry name" value="RNA polymerase alpha subunit dimerisation domain"/>
    <property type="match status" value="1"/>
</dbReference>
<dbReference type="Gene3D" id="3.90.1110.10">
    <property type="entry name" value="RNA polymerase Rpb2, domain 2"/>
    <property type="match status" value="2"/>
</dbReference>
<dbReference type="HAMAP" id="MF_01321">
    <property type="entry name" value="RNApol_bact_RpoB"/>
    <property type="match status" value="1"/>
</dbReference>
<dbReference type="InterPro" id="IPR042107">
    <property type="entry name" value="DNA-dir_RNA_pol_bsu_ext_1_sf"/>
</dbReference>
<dbReference type="InterPro" id="IPR019462">
    <property type="entry name" value="DNA-dir_RNA_pol_bsu_external_1"/>
</dbReference>
<dbReference type="InterPro" id="IPR015712">
    <property type="entry name" value="DNA-dir_RNA_pol_su2"/>
</dbReference>
<dbReference type="InterPro" id="IPR007120">
    <property type="entry name" value="DNA-dir_RNAP_su2_dom"/>
</dbReference>
<dbReference type="InterPro" id="IPR037033">
    <property type="entry name" value="DNA-dir_RNAP_su2_hyb_sf"/>
</dbReference>
<dbReference type="InterPro" id="IPR010243">
    <property type="entry name" value="RNA_pol_bsu_bac"/>
</dbReference>
<dbReference type="InterPro" id="IPR007121">
    <property type="entry name" value="RNA_pol_bsu_CS"/>
</dbReference>
<dbReference type="InterPro" id="IPR007644">
    <property type="entry name" value="RNA_pol_bsu_protrusion"/>
</dbReference>
<dbReference type="InterPro" id="IPR007642">
    <property type="entry name" value="RNA_pol_Rpb2_2"/>
</dbReference>
<dbReference type="InterPro" id="IPR037034">
    <property type="entry name" value="RNA_pol_Rpb2_2_sf"/>
</dbReference>
<dbReference type="InterPro" id="IPR007645">
    <property type="entry name" value="RNA_pol_Rpb2_3"/>
</dbReference>
<dbReference type="InterPro" id="IPR007641">
    <property type="entry name" value="RNA_pol_Rpb2_7"/>
</dbReference>
<dbReference type="InterPro" id="IPR014724">
    <property type="entry name" value="RNA_pol_RPB2_OB-fold"/>
</dbReference>
<dbReference type="NCBIfam" id="NF001616">
    <property type="entry name" value="PRK00405.1"/>
    <property type="match status" value="1"/>
</dbReference>
<dbReference type="NCBIfam" id="TIGR02013">
    <property type="entry name" value="rpoB"/>
    <property type="match status" value="1"/>
</dbReference>
<dbReference type="PANTHER" id="PTHR20856">
    <property type="entry name" value="DNA-DIRECTED RNA POLYMERASE I SUBUNIT 2"/>
    <property type="match status" value="1"/>
</dbReference>
<dbReference type="Pfam" id="PF04563">
    <property type="entry name" value="RNA_pol_Rpb2_1"/>
    <property type="match status" value="1"/>
</dbReference>
<dbReference type="Pfam" id="PF04561">
    <property type="entry name" value="RNA_pol_Rpb2_2"/>
    <property type="match status" value="2"/>
</dbReference>
<dbReference type="Pfam" id="PF04565">
    <property type="entry name" value="RNA_pol_Rpb2_3"/>
    <property type="match status" value="1"/>
</dbReference>
<dbReference type="Pfam" id="PF10385">
    <property type="entry name" value="RNA_pol_Rpb2_45"/>
    <property type="match status" value="1"/>
</dbReference>
<dbReference type="Pfam" id="PF00562">
    <property type="entry name" value="RNA_pol_Rpb2_6"/>
    <property type="match status" value="1"/>
</dbReference>
<dbReference type="Pfam" id="PF04560">
    <property type="entry name" value="RNA_pol_Rpb2_7"/>
    <property type="match status" value="1"/>
</dbReference>
<dbReference type="SUPFAM" id="SSF64484">
    <property type="entry name" value="beta and beta-prime subunits of DNA dependent RNA-polymerase"/>
    <property type="match status" value="1"/>
</dbReference>
<dbReference type="PROSITE" id="PS01166">
    <property type="entry name" value="RNA_POL_BETA"/>
    <property type="match status" value="2"/>
</dbReference>
<feature type="chain" id="PRO_0000224054" description="DNA-directed RNA polymerase subunit beta">
    <location>
        <begin position="1"/>
        <end position="1380"/>
    </location>
</feature>
<evidence type="ECO:0000255" key="1">
    <source>
        <dbReference type="HAMAP-Rule" id="MF_01321"/>
    </source>
</evidence>
<keyword id="KW-0240">DNA-directed RNA polymerase</keyword>
<keyword id="KW-0548">Nucleotidyltransferase</keyword>
<keyword id="KW-0804">Transcription</keyword>
<keyword id="KW-0808">Transferase</keyword>
<accession>Q3YST5</accession>
<proteinExistence type="inferred from homology"/>
<name>RPOB_EHRCJ</name>
<reference key="1">
    <citation type="journal article" date="2006" name="J. Bacteriol.">
        <title>The genome of the obligately intracellular bacterium Ehrlichia canis reveals themes of complex membrane structure and immune evasion strategies.</title>
        <authorList>
            <person name="Mavromatis K."/>
            <person name="Doyle C.K."/>
            <person name="Lykidis A."/>
            <person name="Ivanova N."/>
            <person name="Francino M.P."/>
            <person name="Chain P."/>
            <person name="Shin M."/>
            <person name="Malfatti S."/>
            <person name="Larimer F."/>
            <person name="Copeland A."/>
            <person name="Detter J.C."/>
            <person name="Land M."/>
            <person name="Richardson P.M."/>
            <person name="Yu X.J."/>
            <person name="Walker D.H."/>
            <person name="McBride J.W."/>
            <person name="Kyrpides N.C."/>
        </authorList>
    </citation>
    <scope>NUCLEOTIDE SEQUENCE [LARGE SCALE GENOMIC DNA]</scope>
    <source>
        <strain>Jake</strain>
    </source>
</reference>
<protein>
    <recommendedName>
        <fullName evidence="1">DNA-directed RNA polymerase subunit beta</fullName>
        <shortName evidence="1">RNAP subunit beta</shortName>
        <ecNumber evidence="1">2.7.7.6</ecNumber>
    </recommendedName>
    <alternativeName>
        <fullName evidence="1">RNA polymerase subunit beta</fullName>
    </alternativeName>
    <alternativeName>
        <fullName evidence="1">Transcriptase subunit beta</fullName>
    </alternativeName>
</protein>
<sequence>MSSSVTPTKYVLNSFNSVPRLSYAKSIDIKDSLTDLIKIQRDSYNAFIGVGQNTESGIKNIFESMFPIEDLLGRAVLEFVSYSIGEPQYDEYECIKRGITFSVPIRIVLRFIVWKVQEVSFKEVKYVVDEETSEKSIKYIKEQEVSIGDLPTMTPHGTFIINGIERVIVSQMHRSPGVFFDSDKGKTYSSGKLIYSARIIPYRGSWLDFEFDIKDILYFRIDRKRKLPVSLLLRALGLSNNDILNTFYDKIRYVKCEKGWIVPFVVDRFRGVRLSHDLVDVNGNVLVKANTRITLRMAKKLANDGLTEYLVPFAEIQGLFIANDLFDPSGNALIISAGENITSEHINKLELFDIKEIFVLNIDFLTVGPYILNTLFLDKNVTYEDALFEIYKVLRSGESPSLDTIKAFFDGLFFEKERYDLSTVGRIKLNDHLGLNVSEDITVLTKDDIIHVIKKLVLLRDGEGSVDDIDHLGNRRVRSVGEFIENQFRIGILRLERMIMDYMSSVNFDNAMPCDFVNPKILATVLKDFFSSSQLSQFMDQTNPLSEVTHKRRLSALGPGGLTRERAGFEVRDVHPTHYGRICPIETPEGQNIGLISSLAIYARINKHGFIESPYRKVDKGVVTDKVEYLLAMQESNYYIADASATLDENNQFVDDMLYCRHDGNFVMVKREEVDYIDVSPKQIVSVAASLIPFLENNDANRALMGSNMQRQAVPLLKADAPLIGTGMESIVAAGSGTVVLAKRGGIVHRVDGLYIVIRAFDQEKNEYLGVDVYNLRKFQRSNHNTCINQRPLVKPGDYVKANDVIADGSAIDQGELALGKNVLVAFMSWQGYNFEDSIVISSEVVKKDVFTSIHIEEFECVVRDTTLGPEKIMRSVPDINEDSLSHLDDVGIVNIGAEVSAGDILVGKVTPRPPISLPPETKLLVTIFGEKVFDCVDSSLYLPLDVEGTVVDVHVFVRRGVEENDRSLLIKQNEINGFIKERDYEIDVVSEYFYDELKRVLVNSGVQCNNQNVNDYLESTPKKDWWNVNLSDETVLLQINNLREKFDSMIQNAHSKFDQKIDKLNYGYDLPQGVLCIVKVFVAVKHNLQPGDKMSGRHGNKGVISRIVPVEDMPYLEDGTPVDIILNSLGVPSRMNVGQILETHFGWASVNLGKKIGHILDNIDELTISHLRNFLDQVYDGQDLKYNIQSMSDEDLLAFAERLRGGVPMAAPVFEGPKDSQISNLLKLADLDVSGQVDLYDGRIGEKFDRKVTVGYIYMLKLHHLVDDKIHARSVGPYGLVTQQPLGGKSHFGGQRFGEMECWALQAYGAAYTLQEMLTVKSDDIVGRVKIYESIIKGDSNFECGIPESFNVMVKELRSLCLDVALKQDKDFLSSEVNN</sequence>
<comment type="function">
    <text evidence="1">DNA-dependent RNA polymerase catalyzes the transcription of DNA into RNA using the four ribonucleoside triphosphates as substrates.</text>
</comment>
<comment type="catalytic activity">
    <reaction evidence="1">
        <text>RNA(n) + a ribonucleoside 5'-triphosphate = RNA(n+1) + diphosphate</text>
        <dbReference type="Rhea" id="RHEA:21248"/>
        <dbReference type="Rhea" id="RHEA-COMP:14527"/>
        <dbReference type="Rhea" id="RHEA-COMP:17342"/>
        <dbReference type="ChEBI" id="CHEBI:33019"/>
        <dbReference type="ChEBI" id="CHEBI:61557"/>
        <dbReference type="ChEBI" id="CHEBI:140395"/>
        <dbReference type="EC" id="2.7.7.6"/>
    </reaction>
</comment>
<comment type="subunit">
    <text evidence="1">The RNAP catalytic core consists of 2 alpha, 1 beta, 1 beta' and 1 omega subunit. When a sigma factor is associated with the core the holoenzyme is formed, which can initiate transcription.</text>
</comment>
<comment type="similarity">
    <text evidence="1">Belongs to the RNA polymerase beta chain family.</text>
</comment>
<gene>
    <name evidence="1" type="primary">rpoB</name>
    <name type="ordered locus">Ecaj_0169</name>
</gene>
<organism>
    <name type="scientific">Ehrlichia canis (strain Jake)</name>
    <dbReference type="NCBI Taxonomy" id="269484"/>
    <lineage>
        <taxon>Bacteria</taxon>
        <taxon>Pseudomonadati</taxon>
        <taxon>Pseudomonadota</taxon>
        <taxon>Alphaproteobacteria</taxon>
        <taxon>Rickettsiales</taxon>
        <taxon>Anaplasmataceae</taxon>
        <taxon>Ehrlichia</taxon>
    </lineage>
</organism>